<keyword id="KW-0067">ATP-binding</keyword>
<keyword id="KW-1003">Cell membrane</keyword>
<keyword id="KW-0472">Membrane</keyword>
<keyword id="KW-0547">Nucleotide-binding</keyword>
<keyword id="KW-1278">Translocase</keyword>
<keyword id="KW-0813">Transport</keyword>
<feature type="chain" id="PRO_0000288001" description="Energy-coupling factor transporter ATP-binding protein EcfA1">
    <location>
        <begin position="1"/>
        <end position="279"/>
    </location>
</feature>
<feature type="domain" description="ABC transporter" evidence="1">
    <location>
        <begin position="5"/>
        <end position="240"/>
    </location>
</feature>
<feature type="binding site" evidence="1">
    <location>
        <begin position="40"/>
        <end position="47"/>
    </location>
    <ligand>
        <name>ATP</name>
        <dbReference type="ChEBI" id="CHEBI:30616"/>
    </ligand>
</feature>
<dbReference type="EC" id="7.-.-.-" evidence="1"/>
<dbReference type="EMBL" id="CP000056">
    <property type="protein sequence ID" value="AAX72988.1"/>
    <property type="status" value="ALT_INIT"/>
    <property type="molecule type" value="Genomic_DNA"/>
</dbReference>
<dbReference type="RefSeq" id="WP_014407975.1">
    <property type="nucleotide sequence ID" value="NC_007296.2"/>
</dbReference>
<dbReference type="SMR" id="Q48QM2"/>
<dbReference type="KEGG" id="spb:M28_Spy1878"/>
<dbReference type="HOGENOM" id="CLU_000604_1_22_9"/>
<dbReference type="GO" id="GO:0043190">
    <property type="term" value="C:ATP-binding cassette (ABC) transporter complex"/>
    <property type="evidence" value="ECO:0007669"/>
    <property type="project" value="TreeGrafter"/>
</dbReference>
<dbReference type="GO" id="GO:0005524">
    <property type="term" value="F:ATP binding"/>
    <property type="evidence" value="ECO:0007669"/>
    <property type="project" value="UniProtKB-KW"/>
</dbReference>
<dbReference type="GO" id="GO:0016887">
    <property type="term" value="F:ATP hydrolysis activity"/>
    <property type="evidence" value="ECO:0007669"/>
    <property type="project" value="InterPro"/>
</dbReference>
<dbReference type="GO" id="GO:0042626">
    <property type="term" value="F:ATPase-coupled transmembrane transporter activity"/>
    <property type="evidence" value="ECO:0007669"/>
    <property type="project" value="TreeGrafter"/>
</dbReference>
<dbReference type="CDD" id="cd03225">
    <property type="entry name" value="ABC_cobalt_CbiO_domain1"/>
    <property type="match status" value="1"/>
</dbReference>
<dbReference type="FunFam" id="3.40.50.300:FF:000224">
    <property type="entry name" value="Energy-coupling factor transporter ATP-binding protein EcfA"/>
    <property type="match status" value="1"/>
</dbReference>
<dbReference type="Gene3D" id="3.40.50.300">
    <property type="entry name" value="P-loop containing nucleotide triphosphate hydrolases"/>
    <property type="match status" value="1"/>
</dbReference>
<dbReference type="InterPro" id="IPR003593">
    <property type="entry name" value="AAA+_ATPase"/>
</dbReference>
<dbReference type="InterPro" id="IPR003439">
    <property type="entry name" value="ABC_transporter-like_ATP-bd"/>
</dbReference>
<dbReference type="InterPro" id="IPR017871">
    <property type="entry name" value="ABC_transporter-like_CS"/>
</dbReference>
<dbReference type="InterPro" id="IPR015856">
    <property type="entry name" value="ABC_transpr_CbiO/EcfA_su"/>
</dbReference>
<dbReference type="InterPro" id="IPR050095">
    <property type="entry name" value="ECF_ABC_transporter_ATP-bd"/>
</dbReference>
<dbReference type="InterPro" id="IPR030947">
    <property type="entry name" value="EcfA_1"/>
</dbReference>
<dbReference type="InterPro" id="IPR027417">
    <property type="entry name" value="P-loop_NTPase"/>
</dbReference>
<dbReference type="NCBIfam" id="TIGR04520">
    <property type="entry name" value="ECF_ATPase_1"/>
    <property type="match status" value="1"/>
</dbReference>
<dbReference type="NCBIfam" id="NF010156">
    <property type="entry name" value="PRK13635.1"/>
    <property type="match status" value="1"/>
</dbReference>
<dbReference type="NCBIfam" id="NF010167">
    <property type="entry name" value="PRK13648.1"/>
    <property type="match status" value="1"/>
</dbReference>
<dbReference type="PANTHER" id="PTHR43553:SF24">
    <property type="entry name" value="ENERGY-COUPLING FACTOR TRANSPORTER ATP-BINDING PROTEIN ECFA1"/>
    <property type="match status" value="1"/>
</dbReference>
<dbReference type="PANTHER" id="PTHR43553">
    <property type="entry name" value="HEAVY METAL TRANSPORTER"/>
    <property type="match status" value="1"/>
</dbReference>
<dbReference type="Pfam" id="PF00005">
    <property type="entry name" value="ABC_tran"/>
    <property type="match status" value="1"/>
</dbReference>
<dbReference type="SMART" id="SM00382">
    <property type="entry name" value="AAA"/>
    <property type="match status" value="1"/>
</dbReference>
<dbReference type="SUPFAM" id="SSF52540">
    <property type="entry name" value="P-loop containing nucleoside triphosphate hydrolases"/>
    <property type="match status" value="1"/>
</dbReference>
<dbReference type="PROSITE" id="PS00211">
    <property type="entry name" value="ABC_TRANSPORTER_1"/>
    <property type="match status" value="1"/>
</dbReference>
<dbReference type="PROSITE" id="PS50893">
    <property type="entry name" value="ABC_TRANSPORTER_2"/>
    <property type="match status" value="1"/>
</dbReference>
<dbReference type="PROSITE" id="PS51246">
    <property type="entry name" value="CBIO"/>
    <property type="match status" value="1"/>
</dbReference>
<comment type="function">
    <text evidence="1">ATP-binding (A) component of a common energy-coupling factor (ECF) ABC-transporter complex. Unlike classic ABC transporters this ECF transporter provides the energy necessary to transport a number of different substrates.</text>
</comment>
<comment type="subunit">
    <text evidence="1">Forms a stable energy-coupling factor (ECF) transporter complex composed of 2 membrane-embedded substrate-binding proteins (S component), 2 ATP-binding proteins (A component) and 2 transmembrane proteins (T component).</text>
</comment>
<comment type="subcellular location">
    <subcellularLocation>
        <location evidence="1">Cell membrane</location>
        <topology evidence="1">Peripheral membrane protein</topology>
    </subcellularLocation>
</comment>
<comment type="similarity">
    <text evidence="1">Belongs to the ABC transporter superfamily. Energy-coupling factor EcfA family.</text>
</comment>
<comment type="sequence caution" evidence="2">
    <conflict type="erroneous initiation">
        <sequence resource="EMBL-CDS" id="AAX72988"/>
    </conflict>
    <text>Extended N-terminus.</text>
</comment>
<reference key="1">
    <citation type="journal article" date="2005" name="J. Infect. Dis.">
        <title>Genome sequence of a serotype M28 strain of group A Streptococcus: potential new insights into puerperal sepsis and bacterial disease specificity.</title>
        <authorList>
            <person name="Green N.M."/>
            <person name="Zhang S."/>
            <person name="Porcella S.F."/>
            <person name="Nagiec M.J."/>
            <person name="Barbian K.D."/>
            <person name="Beres S.B."/>
            <person name="Lefebvre R.B."/>
            <person name="Musser J.M."/>
        </authorList>
    </citation>
    <scope>NUCLEOTIDE SEQUENCE [LARGE SCALE GENOMIC DNA]</scope>
    <source>
        <strain>MGAS6180</strain>
    </source>
</reference>
<protein>
    <recommendedName>
        <fullName evidence="1">Energy-coupling factor transporter ATP-binding protein EcfA1</fullName>
        <shortName evidence="1">ECF transporter A component EcfA1</shortName>
        <ecNumber evidence="1">7.-.-.-</ecNumber>
    </recommendedName>
</protein>
<organism>
    <name type="scientific">Streptococcus pyogenes serotype M28 (strain MGAS6180)</name>
    <dbReference type="NCBI Taxonomy" id="319701"/>
    <lineage>
        <taxon>Bacteria</taxon>
        <taxon>Bacillati</taxon>
        <taxon>Bacillota</taxon>
        <taxon>Bacilli</taxon>
        <taxon>Lactobacillales</taxon>
        <taxon>Streptococcaceae</taxon>
        <taxon>Streptococcus</taxon>
    </lineage>
</organism>
<evidence type="ECO:0000255" key="1">
    <source>
        <dbReference type="HAMAP-Rule" id="MF_01710"/>
    </source>
</evidence>
<evidence type="ECO:0000305" key="2"/>
<name>ECFA1_STRPM</name>
<sequence>MSAIIELKKVTFNYHKDQEKPTLDGVSFHVKQGEWLSIIGHNGSGKSTTIRLIDGLLEPESGSIIVDGDLLTITNVWEIRHKIGMVFQNPDNQFVGATVEDDVAFGLENKGIAHEDIKERVNHALELVGMQNFKEKEPARLSGGQKQRVAIAGAVAMKPKIIILDEATSMLDPKGRLELIKTIKNIRDDYQLTVISITHDLDEVALSDRVLVMKDGQVESTSTPEQLFARGDELLQLGLDIPFTTSVVQMLQEEGYPVDYGYLTEKELENQLCQLISKM</sequence>
<proteinExistence type="inferred from homology"/>
<gene>
    <name evidence="1" type="primary">ecfA1</name>
    <name type="synonym">cbiO1</name>
    <name type="ordered locus">M28_Spy1878</name>
</gene>
<accession>Q48QM2</accession>